<gene>
    <name type="primary">Ilvbl</name>
    <name evidence="2" type="synonym">Hacl2</name>
</gene>
<protein>
    <recommendedName>
        <fullName>2-hydroxyacyl-CoA lyase 2</fullName>
        <ecNumber evidence="2">4.1.2.-</ecNumber>
    </recommendedName>
    <alternativeName>
        <fullName>Acetolactate synthase-like protein</fullName>
    </alternativeName>
    <alternativeName>
        <fullName>IlvB-like protein</fullName>
    </alternativeName>
</protein>
<sequence length="632" mass="68156">METSAAAASAGGFFPSFLLLAFGTLVAAVLGVAHRLGLFYQLMHKVDKTSIRHGGESVAAVLRAHGVRFVFTLVGGHISPLLVACEKLGIRVVDTRHEVTAVFAADAVARLTGTVGVAAVTAGPGLTNTVTAVKNAQVAQSPVLLLGGAASTLLQKRGALQAIDQMSLFRPLCKFCASVRRVRDIVPTLRTAIAAAQSGTPGPVFVELPLDVLYPYFMVEKEMIPTKLPNSLMGRVVVWYLQNCLANLFVGAWEPRPEGPLPLDIPQASPQQVQRCVEILSRAKRPLLVLGSQALLPPTPANKLRAAVETLGVPCFLGGMSRGLLGRNHPLHIRQNRSAALKKADVVVLAGAVCDFRLSYGRVLNRKSSIIIVNRNRDDLLLNSDIFWKPQEAVQGDVGSFMIKLVEGLQGQMWSSDWAEELRKADQQKEQTYRDKALMPVLQHLNPVWVLQQVEETLPDNALLVVDGGDFVATAAYLVQPRGPLRWLDPGAFGTLGVGAGFALGAKLCQPEAEVWCLFGDGAFGYSLIEFDTFVRHKVPVIALVGNDAGWTQISREQVPRLGSDVACSLAYTDYHKAAMGLGAQGLILSRDNKDQVVKVLREGQQLCQDGHAVVVNILIGRTDFRDGSISV</sequence>
<keyword id="KW-0025">Alternative splicing</keyword>
<keyword id="KW-0256">Endoplasmic reticulum</keyword>
<keyword id="KW-0276">Fatty acid metabolism</keyword>
<keyword id="KW-0443">Lipid metabolism</keyword>
<keyword id="KW-0456">Lyase</keyword>
<keyword id="KW-0460">Magnesium</keyword>
<keyword id="KW-0472">Membrane</keyword>
<keyword id="KW-0479">Metal-binding</keyword>
<keyword id="KW-0597">Phosphoprotein</keyword>
<keyword id="KW-1185">Reference proteome</keyword>
<keyword id="KW-0786">Thiamine pyrophosphate</keyword>
<keyword id="KW-0812">Transmembrane</keyword>
<keyword id="KW-1133">Transmembrane helix</keyword>
<name>HACL2_MOUSE</name>
<feature type="chain" id="PRO_0000314826" description="2-hydroxyacyl-CoA lyase 2">
    <location>
        <begin position="1"/>
        <end position="632"/>
    </location>
</feature>
<feature type="transmembrane region" description="Helical" evidence="5">
    <location>
        <begin position="13"/>
        <end position="33"/>
    </location>
</feature>
<feature type="region of interest" description="Thiamine pyrophosphate binding" evidence="3">
    <location>
        <begin position="470"/>
        <end position="550"/>
    </location>
</feature>
<feature type="binding site" evidence="3">
    <location>
        <position position="98"/>
    </location>
    <ligand>
        <name>thiamine diphosphate</name>
        <dbReference type="ChEBI" id="CHEBI:58937"/>
    </ligand>
</feature>
<feature type="binding site" evidence="3">
    <location>
        <position position="521"/>
    </location>
    <ligand>
        <name>Mg(2+)</name>
        <dbReference type="ChEBI" id="CHEBI:18420"/>
    </ligand>
</feature>
<feature type="binding site" evidence="3">
    <location>
        <position position="547"/>
    </location>
    <ligand>
        <name>Mg(2+)</name>
        <dbReference type="ChEBI" id="CHEBI:18420"/>
    </ligand>
</feature>
<feature type="modified residue" description="Phosphoserine" evidence="8">
    <location>
        <position position="369"/>
    </location>
</feature>
<feature type="splice variant" id="VSP_030392" description="In isoform 3." evidence="6">
    <original>GDVGSF</original>
    <variation>AGPASP</variation>
    <location>
        <begin position="396"/>
        <end position="401"/>
    </location>
</feature>
<feature type="splice variant" id="VSP_030393" description="In isoform 2." evidence="6">
    <original>DVGSFMIKLVEGLQGQMWSS</original>
    <variation>ECTPRDPTMCMVSSSCLCCI</variation>
    <location>
        <begin position="397"/>
        <end position="416"/>
    </location>
</feature>
<feature type="splice variant" id="VSP_030394" description="In isoform 3." evidence="6">
    <location>
        <begin position="402"/>
        <end position="632"/>
    </location>
</feature>
<feature type="splice variant" id="VSP_030395" description="In isoform 2." evidence="6">
    <location>
        <begin position="417"/>
        <end position="632"/>
    </location>
</feature>
<reference key="1">
    <citation type="journal article" date="2005" name="Science">
        <title>The transcriptional landscape of the mammalian genome.</title>
        <authorList>
            <person name="Carninci P."/>
            <person name="Kasukawa T."/>
            <person name="Katayama S."/>
            <person name="Gough J."/>
            <person name="Frith M.C."/>
            <person name="Maeda N."/>
            <person name="Oyama R."/>
            <person name="Ravasi T."/>
            <person name="Lenhard B."/>
            <person name="Wells C."/>
            <person name="Kodzius R."/>
            <person name="Shimokawa K."/>
            <person name="Bajic V.B."/>
            <person name="Brenner S.E."/>
            <person name="Batalov S."/>
            <person name="Forrest A.R."/>
            <person name="Zavolan M."/>
            <person name="Davis M.J."/>
            <person name="Wilming L.G."/>
            <person name="Aidinis V."/>
            <person name="Allen J.E."/>
            <person name="Ambesi-Impiombato A."/>
            <person name="Apweiler R."/>
            <person name="Aturaliya R.N."/>
            <person name="Bailey T.L."/>
            <person name="Bansal M."/>
            <person name="Baxter L."/>
            <person name="Beisel K.W."/>
            <person name="Bersano T."/>
            <person name="Bono H."/>
            <person name="Chalk A.M."/>
            <person name="Chiu K.P."/>
            <person name="Choudhary V."/>
            <person name="Christoffels A."/>
            <person name="Clutterbuck D.R."/>
            <person name="Crowe M.L."/>
            <person name="Dalla E."/>
            <person name="Dalrymple B.P."/>
            <person name="de Bono B."/>
            <person name="Della Gatta G."/>
            <person name="di Bernardo D."/>
            <person name="Down T."/>
            <person name="Engstrom P."/>
            <person name="Fagiolini M."/>
            <person name="Faulkner G."/>
            <person name="Fletcher C.F."/>
            <person name="Fukushima T."/>
            <person name="Furuno M."/>
            <person name="Futaki S."/>
            <person name="Gariboldi M."/>
            <person name="Georgii-Hemming P."/>
            <person name="Gingeras T.R."/>
            <person name="Gojobori T."/>
            <person name="Green R.E."/>
            <person name="Gustincich S."/>
            <person name="Harbers M."/>
            <person name="Hayashi Y."/>
            <person name="Hensch T.K."/>
            <person name="Hirokawa N."/>
            <person name="Hill D."/>
            <person name="Huminiecki L."/>
            <person name="Iacono M."/>
            <person name="Ikeo K."/>
            <person name="Iwama A."/>
            <person name="Ishikawa T."/>
            <person name="Jakt M."/>
            <person name="Kanapin A."/>
            <person name="Katoh M."/>
            <person name="Kawasawa Y."/>
            <person name="Kelso J."/>
            <person name="Kitamura H."/>
            <person name="Kitano H."/>
            <person name="Kollias G."/>
            <person name="Krishnan S.P."/>
            <person name="Kruger A."/>
            <person name="Kummerfeld S.K."/>
            <person name="Kurochkin I.V."/>
            <person name="Lareau L.F."/>
            <person name="Lazarevic D."/>
            <person name="Lipovich L."/>
            <person name="Liu J."/>
            <person name="Liuni S."/>
            <person name="McWilliam S."/>
            <person name="Madan Babu M."/>
            <person name="Madera M."/>
            <person name="Marchionni L."/>
            <person name="Matsuda H."/>
            <person name="Matsuzawa S."/>
            <person name="Miki H."/>
            <person name="Mignone F."/>
            <person name="Miyake S."/>
            <person name="Morris K."/>
            <person name="Mottagui-Tabar S."/>
            <person name="Mulder N."/>
            <person name="Nakano N."/>
            <person name="Nakauchi H."/>
            <person name="Ng P."/>
            <person name="Nilsson R."/>
            <person name="Nishiguchi S."/>
            <person name="Nishikawa S."/>
            <person name="Nori F."/>
            <person name="Ohara O."/>
            <person name="Okazaki Y."/>
            <person name="Orlando V."/>
            <person name="Pang K.C."/>
            <person name="Pavan W.J."/>
            <person name="Pavesi G."/>
            <person name="Pesole G."/>
            <person name="Petrovsky N."/>
            <person name="Piazza S."/>
            <person name="Reed J."/>
            <person name="Reid J.F."/>
            <person name="Ring B.Z."/>
            <person name="Ringwald M."/>
            <person name="Rost B."/>
            <person name="Ruan Y."/>
            <person name="Salzberg S.L."/>
            <person name="Sandelin A."/>
            <person name="Schneider C."/>
            <person name="Schoenbach C."/>
            <person name="Sekiguchi K."/>
            <person name="Semple C.A."/>
            <person name="Seno S."/>
            <person name="Sessa L."/>
            <person name="Sheng Y."/>
            <person name="Shibata Y."/>
            <person name="Shimada H."/>
            <person name="Shimada K."/>
            <person name="Silva D."/>
            <person name="Sinclair B."/>
            <person name="Sperling S."/>
            <person name="Stupka E."/>
            <person name="Sugiura K."/>
            <person name="Sultana R."/>
            <person name="Takenaka Y."/>
            <person name="Taki K."/>
            <person name="Tammoja K."/>
            <person name="Tan S.L."/>
            <person name="Tang S."/>
            <person name="Taylor M.S."/>
            <person name="Tegner J."/>
            <person name="Teichmann S.A."/>
            <person name="Ueda H.R."/>
            <person name="van Nimwegen E."/>
            <person name="Verardo R."/>
            <person name="Wei C.L."/>
            <person name="Yagi K."/>
            <person name="Yamanishi H."/>
            <person name="Zabarovsky E."/>
            <person name="Zhu S."/>
            <person name="Zimmer A."/>
            <person name="Hide W."/>
            <person name="Bult C."/>
            <person name="Grimmond S.M."/>
            <person name="Teasdale R.D."/>
            <person name="Liu E.T."/>
            <person name="Brusic V."/>
            <person name="Quackenbush J."/>
            <person name="Wahlestedt C."/>
            <person name="Mattick J.S."/>
            <person name="Hume D.A."/>
            <person name="Kai C."/>
            <person name="Sasaki D."/>
            <person name="Tomaru Y."/>
            <person name="Fukuda S."/>
            <person name="Kanamori-Katayama M."/>
            <person name="Suzuki M."/>
            <person name="Aoki J."/>
            <person name="Arakawa T."/>
            <person name="Iida J."/>
            <person name="Imamura K."/>
            <person name="Itoh M."/>
            <person name="Kato T."/>
            <person name="Kawaji H."/>
            <person name="Kawagashira N."/>
            <person name="Kawashima T."/>
            <person name="Kojima M."/>
            <person name="Kondo S."/>
            <person name="Konno H."/>
            <person name="Nakano K."/>
            <person name="Ninomiya N."/>
            <person name="Nishio T."/>
            <person name="Okada M."/>
            <person name="Plessy C."/>
            <person name="Shibata K."/>
            <person name="Shiraki T."/>
            <person name="Suzuki S."/>
            <person name="Tagami M."/>
            <person name="Waki K."/>
            <person name="Watahiki A."/>
            <person name="Okamura-Oho Y."/>
            <person name="Suzuki H."/>
            <person name="Kawai J."/>
            <person name="Hayashizaki Y."/>
        </authorList>
    </citation>
    <scope>NUCLEOTIDE SEQUENCE [LARGE SCALE MRNA] (ISOFORMS 1; 2 AND 3)</scope>
    <source>
        <strain>C57BL/6J</strain>
        <strain>NOD</strain>
        <tissue>Kidney</tissue>
        <tissue>Liver</tissue>
        <tissue>Pituitary</tissue>
        <tissue>Thymus</tissue>
    </source>
</reference>
<reference key="2">
    <citation type="journal article" date="2004" name="Genome Res.">
        <title>The status, quality, and expansion of the NIH full-length cDNA project: the Mammalian Gene Collection (MGC).</title>
        <authorList>
            <consortium name="The MGC Project Team"/>
        </authorList>
    </citation>
    <scope>NUCLEOTIDE SEQUENCE [LARGE SCALE MRNA] (ISOFORM 1)</scope>
    <source>
        <strain>C57BL/6J</strain>
        <tissue>Brain</tissue>
    </source>
</reference>
<reference key="3">
    <citation type="journal article" date="2010" name="Cell">
        <title>A tissue-specific atlas of mouse protein phosphorylation and expression.</title>
        <authorList>
            <person name="Huttlin E.L."/>
            <person name="Jedrychowski M.P."/>
            <person name="Elias J.E."/>
            <person name="Goswami T."/>
            <person name="Rad R."/>
            <person name="Beausoleil S.A."/>
            <person name="Villen J."/>
            <person name="Haas W."/>
            <person name="Sowa M.E."/>
            <person name="Gygi S.P."/>
        </authorList>
    </citation>
    <scope>PHOSPHORYLATION [LARGE SCALE ANALYSIS] AT SER-369</scope>
    <scope>IDENTIFICATION BY MASS SPECTROMETRY [LARGE SCALE ANALYSIS]</scope>
    <source>
        <tissue>Brain</tissue>
        <tissue>Brown adipose tissue</tissue>
        <tissue>Heart</tissue>
        <tissue>Kidney</tissue>
        <tissue>Liver</tissue>
        <tissue>Lung</tissue>
        <tissue>Pancreas</tissue>
        <tissue>Spleen</tissue>
        <tissue>Testis</tissue>
    </source>
</reference>
<proteinExistence type="evidence at protein level"/>
<dbReference type="EC" id="4.1.2.-" evidence="2"/>
<dbReference type="EMBL" id="AK087956">
    <property type="protein sequence ID" value="BAC40057.1"/>
    <property type="molecule type" value="mRNA"/>
</dbReference>
<dbReference type="EMBL" id="AK133553">
    <property type="protein sequence ID" value="BAE21720.1"/>
    <property type="molecule type" value="mRNA"/>
</dbReference>
<dbReference type="EMBL" id="AK143918">
    <property type="protein sequence ID" value="BAE25603.1"/>
    <property type="molecule type" value="mRNA"/>
</dbReference>
<dbReference type="EMBL" id="AK146075">
    <property type="protein sequence ID" value="BAE26879.1"/>
    <property type="molecule type" value="mRNA"/>
</dbReference>
<dbReference type="EMBL" id="BC056459">
    <property type="protein sequence ID" value="AAH56459.1"/>
    <property type="molecule type" value="mRNA"/>
</dbReference>
<dbReference type="CCDS" id="CCDS23966.1">
    <molecule id="Q8BU33-1"/>
</dbReference>
<dbReference type="CCDS" id="CCDS88046.1">
    <molecule id="Q8BU33-3"/>
</dbReference>
<dbReference type="RefSeq" id="NP_001346231.1">
    <molecule id="Q8BU33-1"/>
    <property type="nucleotide sequence ID" value="NM_001359302.1"/>
</dbReference>
<dbReference type="RefSeq" id="NP_001346232.1">
    <molecule id="Q8BU33-3"/>
    <property type="nucleotide sequence ID" value="NM_001359303.1"/>
</dbReference>
<dbReference type="RefSeq" id="NP_776112.1">
    <molecule id="Q8BU33-1"/>
    <property type="nucleotide sequence ID" value="NM_173751.4"/>
</dbReference>
<dbReference type="RefSeq" id="XP_011241702.1">
    <molecule id="Q8BU33-1"/>
    <property type="nucleotide sequence ID" value="XM_011243400.3"/>
</dbReference>
<dbReference type="RefSeq" id="XP_011241703.1">
    <property type="nucleotide sequence ID" value="XM_011243401.1"/>
</dbReference>
<dbReference type="SMR" id="Q8BU33"/>
<dbReference type="BioGRID" id="229702">
    <property type="interactions" value="6"/>
</dbReference>
<dbReference type="FunCoup" id="Q8BU33">
    <property type="interactions" value="359"/>
</dbReference>
<dbReference type="STRING" id="10090.ENSMUSP00000101023"/>
<dbReference type="GlyGen" id="Q8BU33">
    <property type="glycosylation" value="3 sites"/>
</dbReference>
<dbReference type="iPTMnet" id="Q8BU33"/>
<dbReference type="PhosphoSitePlus" id="Q8BU33"/>
<dbReference type="SwissPalm" id="Q8BU33"/>
<dbReference type="jPOST" id="Q8BU33"/>
<dbReference type="PaxDb" id="10090-ENSMUSP00000101023"/>
<dbReference type="PeptideAtlas" id="Q8BU33"/>
<dbReference type="ProteomicsDB" id="267127">
    <molecule id="Q8BU33-1"/>
</dbReference>
<dbReference type="ProteomicsDB" id="267128">
    <molecule id="Q8BU33-2"/>
</dbReference>
<dbReference type="ProteomicsDB" id="267129">
    <molecule id="Q8BU33-3"/>
</dbReference>
<dbReference type="Pumba" id="Q8BU33"/>
<dbReference type="Antibodypedia" id="26957">
    <property type="antibodies" value="333 antibodies from 21 providers"/>
</dbReference>
<dbReference type="DNASU" id="216136"/>
<dbReference type="Ensembl" id="ENSMUST00000105384.5">
    <molecule id="Q8BU33-1"/>
    <property type="protein sequence ID" value="ENSMUSP00000101023.4"/>
    <property type="gene ID" value="ENSMUSG00000032763.12"/>
</dbReference>
<dbReference type="Ensembl" id="ENSMUST00000218271.2">
    <molecule id="Q8BU33-3"/>
    <property type="protein sequence ID" value="ENSMUSP00000151480.2"/>
    <property type="gene ID" value="ENSMUSG00000032763.12"/>
</dbReference>
<dbReference type="Ensembl" id="ENSMUST00000218885.2">
    <molecule id="Q8BU33-1"/>
    <property type="protein sequence ID" value="ENSMUSP00000151263.2"/>
    <property type="gene ID" value="ENSMUSG00000032763.12"/>
</dbReference>
<dbReference type="Ensembl" id="ENSMUST00000220430.2">
    <molecule id="Q8BU33-2"/>
    <property type="protein sequence ID" value="ENSMUSP00000151674.2"/>
    <property type="gene ID" value="ENSMUSG00000032763.12"/>
</dbReference>
<dbReference type="GeneID" id="216136"/>
<dbReference type="KEGG" id="mmu:216136"/>
<dbReference type="UCSC" id="uc007fxv.2">
    <molecule id="Q8BU33-1"/>
    <property type="organism name" value="mouse"/>
</dbReference>
<dbReference type="UCSC" id="uc007fxw.1">
    <molecule id="Q8BU33-2"/>
    <property type="organism name" value="mouse"/>
</dbReference>
<dbReference type="AGR" id="MGI:1351911"/>
<dbReference type="CTD" id="10994"/>
<dbReference type="MGI" id="MGI:1351911">
    <property type="gene designation" value="Ilvbl"/>
</dbReference>
<dbReference type="VEuPathDB" id="HostDB:ENSMUSG00000032763"/>
<dbReference type="eggNOG" id="KOG1185">
    <property type="taxonomic scope" value="Eukaryota"/>
</dbReference>
<dbReference type="GeneTree" id="ENSGT00940000158035"/>
<dbReference type="HOGENOM" id="CLU_013748_3_3_1"/>
<dbReference type="InParanoid" id="Q8BU33"/>
<dbReference type="OMA" id="QETDMIG"/>
<dbReference type="OrthoDB" id="16262at2759"/>
<dbReference type="PhylomeDB" id="Q8BU33"/>
<dbReference type="TreeFam" id="TF354221"/>
<dbReference type="BioGRID-ORCS" id="216136">
    <property type="hits" value="1 hit in 79 CRISPR screens"/>
</dbReference>
<dbReference type="PRO" id="PR:Q8BU33"/>
<dbReference type="Proteomes" id="UP000000589">
    <property type="component" value="Chromosome 10"/>
</dbReference>
<dbReference type="RNAct" id="Q8BU33">
    <property type="molecule type" value="protein"/>
</dbReference>
<dbReference type="Bgee" id="ENSMUSG00000032763">
    <property type="expression patterns" value="Expressed in jejunum and 247 other cell types or tissues"/>
</dbReference>
<dbReference type="ExpressionAtlas" id="Q8BU33">
    <property type="expression patterns" value="baseline and differential"/>
</dbReference>
<dbReference type="GO" id="GO:0005789">
    <property type="term" value="C:endoplasmic reticulum membrane"/>
    <property type="evidence" value="ECO:0000250"/>
    <property type="project" value="UniProtKB"/>
</dbReference>
<dbReference type="GO" id="GO:0016829">
    <property type="term" value="F:lyase activity"/>
    <property type="evidence" value="ECO:0007669"/>
    <property type="project" value="UniProtKB-KW"/>
</dbReference>
<dbReference type="GO" id="GO:0000287">
    <property type="term" value="F:magnesium ion binding"/>
    <property type="evidence" value="ECO:0007669"/>
    <property type="project" value="InterPro"/>
</dbReference>
<dbReference type="GO" id="GO:0030976">
    <property type="term" value="F:thiamine pyrophosphate binding"/>
    <property type="evidence" value="ECO:0007669"/>
    <property type="project" value="InterPro"/>
</dbReference>
<dbReference type="GO" id="GO:0001561">
    <property type="term" value="P:fatty acid alpha-oxidation"/>
    <property type="evidence" value="ECO:0000250"/>
    <property type="project" value="UniProtKB"/>
</dbReference>
<dbReference type="CDD" id="cd02004">
    <property type="entry name" value="TPP_BZL_OCoD_HPCL"/>
    <property type="match status" value="1"/>
</dbReference>
<dbReference type="CDD" id="cd07035">
    <property type="entry name" value="TPP_PYR_POX_like"/>
    <property type="match status" value="1"/>
</dbReference>
<dbReference type="FunFam" id="3.40.50.1220:FF:000021">
    <property type="entry name" value="IlvB (bacterial acetolactate synthase)-like"/>
    <property type="match status" value="1"/>
</dbReference>
<dbReference type="FunFam" id="3.40.50.970:FF:000048">
    <property type="entry name" value="IlvB (bacterial acetolactate synthase)-like"/>
    <property type="match status" value="1"/>
</dbReference>
<dbReference type="FunFam" id="3.40.50.970:FF:000043">
    <property type="entry name" value="IlvB acetolactate synthase like"/>
    <property type="match status" value="1"/>
</dbReference>
<dbReference type="Gene3D" id="3.40.50.970">
    <property type="match status" value="2"/>
</dbReference>
<dbReference type="Gene3D" id="3.40.50.1220">
    <property type="entry name" value="TPP-binding domain"/>
    <property type="match status" value="1"/>
</dbReference>
<dbReference type="InterPro" id="IPR029035">
    <property type="entry name" value="DHS-like_NAD/FAD-binding_dom"/>
</dbReference>
<dbReference type="InterPro" id="IPR029061">
    <property type="entry name" value="THDP-binding"/>
</dbReference>
<dbReference type="InterPro" id="IPR012000">
    <property type="entry name" value="Thiamin_PyroP_enz_cen_dom"/>
</dbReference>
<dbReference type="InterPro" id="IPR012001">
    <property type="entry name" value="Thiamin_PyroP_enz_TPP-bd_dom"/>
</dbReference>
<dbReference type="InterPro" id="IPR000399">
    <property type="entry name" value="TPP-bd_CS"/>
</dbReference>
<dbReference type="InterPro" id="IPR045229">
    <property type="entry name" value="TPP_enz"/>
</dbReference>
<dbReference type="InterPro" id="IPR011766">
    <property type="entry name" value="TPP_enzyme_TPP-bd"/>
</dbReference>
<dbReference type="PANTHER" id="PTHR18968:SF166">
    <property type="entry name" value="2-HYDROXYACYL-COA LYASE 2"/>
    <property type="match status" value="1"/>
</dbReference>
<dbReference type="PANTHER" id="PTHR18968">
    <property type="entry name" value="THIAMINE PYROPHOSPHATE ENZYMES"/>
    <property type="match status" value="1"/>
</dbReference>
<dbReference type="Pfam" id="PF02775">
    <property type="entry name" value="TPP_enzyme_C"/>
    <property type="match status" value="1"/>
</dbReference>
<dbReference type="Pfam" id="PF00205">
    <property type="entry name" value="TPP_enzyme_M"/>
    <property type="match status" value="1"/>
</dbReference>
<dbReference type="Pfam" id="PF02776">
    <property type="entry name" value="TPP_enzyme_N"/>
    <property type="match status" value="1"/>
</dbReference>
<dbReference type="SUPFAM" id="SSF52467">
    <property type="entry name" value="DHS-like NAD/FAD-binding domain"/>
    <property type="match status" value="1"/>
</dbReference>
<dbReference type="SUPFAM" id="SSF52518">
    <property type="entry name" value="Thiamin diphosphate-binding fold (THDP-binding)"/>
    <property type="match status" value="2"/>
</dbReference>
<dbReference type="PROSITE" id="PS00187">
    <property type="entry name" value="TPP_ENZYMES"/>
    <property type="match status" value="1"/>
</dbReference>
<comment type="function">
    <text evidence="2">Endoplasmic reticulum 2-OH acyl-CoA lyase involved in the cleavage (C1 removal) reaction in the fatty acid alpha-oxydation in a thiamine pyrophosphate (TPP)-dependent manner. Involved in the phytosphingosine degradation pathway.</text>
</comment>
<comment type="catalytic activity">
    <reaction evidence="2">
        <text>2-hydroxyoctadecanoyl-CoA = heptadecanal + formyl-CoA</text>
        <dbReference type="Rhea" id="RHEA:55196"/>
        <dbReference type="ChEBI" id="CHEBI:57376"/>
        <dbReference type="ChEBI" id="CHEBI:74116"/>
        <dbReference type="ChEBI" id="CHEBI:138631"/>
    </reaction>
    <physiologicalReaction direction="left-to-right" evidence="2">
        <dbReference type="Rhea" id="RHEA:55197"/>
    </physiologicalReaction>
</comment>
<comment type="catalytic activity">
    <reaction evidence="2">
        <text>(2R)-hydroxyhexadecanoyl-CoA = pentadecanal + formyl-CoA</text>
        <dbReference type="Rhea" id="RHEA:55212"/>
        <dbReference type="ChEBI" id="CHEBI:17302"/>
        <dbReference type="ChEBI" id="CHEBI:57376"/>
        <dbReference type="ChEBI" id="CHEBI:138654"/>
    </reaction>
    <physiologicalReaction direction="left-to-right" evidence="2">
        <dbReference type="Rhea" id="RHEA:55213"/>
    </physiologicalReaction>
</comment>
<comment type="cofactor">
    <cofactor evidence="4">
        <name>Mg(2+)</name>
        <dbReference type="ChEBI" id="CHEBI:18420"/>
    </cofactor>
    <text evidence="4">Binds 1 Mg(2+) ion per subunit.</text>
</comment>
<comment type="cofactor">
    <cofactor evidence="2">
        <name>thiamine diphosphate</name>
        <dbReference type="ChEBI" id="CHEBI:58937"/>
    </cofactor>
    <text evidence="1">Binds 1 thiamine pyrophosphate per subunit.</text>
</comment>
<comment type="subcellular location">
    <subcellularLocation>
        <location evidence="2">Endoplasmic reticulum membrane</location>
        <topology evidence="5">Single-pass membrane protein</topology>
    </subcellularLocation>
</comment>
<comment type="alternative products">
    <event type="alternative splicing"/>
    <isoform>
        <id>Q8BU33-1</id>
        <name>1</name>
        <sequence type="displayed"/>
    </isoform>
    <isoform>
        <id>Q8BU33-2</id>
        <name>2</name>
        <sequence type="described" ref="VSP_030393 VSP_030395"/>
    </isoform>
    <isoform>
        <id>Q8BU33-3</id>
        <name>3</name>
        <sequence type="described" ref="VSP_030392 VSP_030394"/>
    </isoform>
</comment>
<comment type="similarity">
    <text evidence="7">Belongs to the TPP enzyme family.</text>
</comment>
<evidence type="ECO:0000250" key="1"/>
<evidence type="ECO:0000250" key="2">
    <source>
        <dbReference type="UniProtKB" id="A1L0T0"/>
    </source>
</evidence>
<evidence type="ECO:0000250" key="3">
    <source>
        <dbReference type="UniProtKB" id="P40149"/>
    </source>
</evidence>
<evidence type="ECO:0000250" key="4">
    <source>
        <dbReference type="UniProtKB" id="Q8CHM7"/>
    </source>
</evidence>
<evidence type="ECO:0000255" key="5"/>
<evidence type="ECO:0000303" key="6">
    <source>
    </source>
</evidence>
<evidence type="ECO:0000305" key="7"/>
<evidence type="ECO:0007744" key="8">
    <source>
    </source>
</evidence>
<organism>
    <name type="scientific">Mus musculus</name>
    <name type="common">Mouse</name>
    <dbReference type="NCBI Taxonomy" id="10090"/>
    <lineage>
        <taxon>Eukaryota</taxon>
        <taxon>Metazoa</taxon>
        <taxon>Chordata</taxon>
        <taxon>Craniata</taxon>
        <taxon>Vertebrata</taxon>
        <taxon>Euteleostomi</taxon>
        <taxon>Mammalia</taxon>
        <taxon>Eutheria</taxon>
        <taxon>Euarchontoglires</taxon>
        <taxon>Glires</taxon>
        <taxon>Rodentia</taxon>
        <taxon>Myomorpha</taxon>
        <taxon>Muroidea</taxon>
        <taxon>Muridae</taxon>
        <taxon>Murinae</taxon>
        <taxon>Mus</taxon>
        <taxon>Mus</taxon>
    </lineage>
</organism>
<accession>Q8BU33</accession>
<accession>Q3UNZ4</accession>
<accession>Q3UZY5</accession>